<proteinExistence type="inferred from homology"/>
<name>MDTD_ECOUT</name>
<organism>
    <name type="scientific">Escherichia coli (strain UTI89 / UPEC)</name>
    <dbReference type="NCBI Taxonomy" id="364106"/>
    <lineage>
        <taxon>Bacteria</taxon>
        <taxon>Pseudomonadati</taxon>
        <taxon>Pseudomonadota</taxon>
        <taxon>Gammaproteobacteria</taxon>
        <taxon>Enterobacterales</taxon>
        <taxon>Enterobacteriaceae</taxon>
        <taxon>Escherichia</taxon>
    </lineage>
</organism>
<evidence type="ECO:0000255" key="1">
    <source>
        <dbReference type="HAMAP-Rule" id="MF_01577"/>
    </source>
</evidence>
<reference key="1">
    <citation type="journal article" date="2006" name="Proc. Natl. Acad. Sci. U.S.A.">
        <title>Identification of genes subject to positive selection in uropathogenic strains of Escherichia coli: a comparative genomics approach.</title>
        <authorList>
            <person name="Chen S.L."/>
            <person name="Hung C.-S."/>
            <person name="Xu J."/>
            <person name="Reigstad C.S."/>
            <person name="Magrini V."/>
            <person name="Sabo A."/>
            <person name="Blasiar D."/>
            <person name="Bieri T."/>
            <person name="Meyer R.R."/>
            <person name="Ozersky P."/>
            <person name="Armstrong J.R."/>
            <person name="Fulton R.S."/>
            <person name="Latreille J.P."/>
            <person name="Spieth J."/>
            <person name="Hooton T.M."/>
            <person name="Mardis E.R."/>
            <person name="Hultgren S.J."/>
            <person name="Gordon J.I."/>
        </authorList>
    </citation>
    <scope>NUCLEOTIDE SEQUENCE [LARGE SCALE GENOMIC DNA]</scope>
    <source>
        <strain>UTI89 / UPEC</strain>
    </source>
</reference>
<gene>
    <name evidence="1" type="primary">mdtD</name>
    <name type="ordered locus">UTI89_C2352</name>
</gene>
<accession>Q1R9Z4</accession>
<feature type="chain" id="PRO_0000268594" description="Putative multidrug resistance protein MdtD">
    <location>
        <begin position="1"/>
        <end position="471"/>
    </location>
</feature>
<feature type="topological domain" description="Periplasmic" evidence="1">
    <location>
        <begin position="1"/>
        <end position="11"/>
    </location>
</feature>
<feature type="transmembrane region" description="Helical" evidence="1">
    <location>
        <begin position="12"/>
        <end position="32"/>
    </location>
</feature>
<feature type="topological domain" description="Cytoplasmic" evidence="1">
    <location>
        <begin position="33"/>
        <end position="48"/>
    </location>
</feature>
<feature type="transmembrane region" description="Helical" evidence="1">
    <location>
        <begin position="49"/>
        <end position="69"/>
    </location>
</feature>
<feature type="topological domain" description="Periplasmic" evidence="1">
    <location>
        <begin position="70"/>
        <end position="76"/>
    </location>
</feature>
<feature type="transmembrane region" description="Helical" evidence="1">
    <location>
        <begin position="77"/>
        <end position="97"/>
    </location>
</feature>
<feature type="topological domain" description="Cytoplasmic" evidence="1">
    <location>
        <begin position="98"/>
        <end position="101"/>
    </location>
</feature>
<feature type="transmembrane region" description="Helical" evidence="1">
    <location>
        <begin position="102"/>
        <end position="124"/>
    </location>
</feature>
<feature type="topological domain" description="Periplasmic" evidence="1">
    <location>
        <begin position="125"/>
        <end position="137"/>
    </location>
</feature>
<feature type="transmembrane region" description="Helical" evidence="1">
    <location>
        <begin position="138"/>
        <end position="158"/>
    </location>
</feature>
<feature type="topological domain" description="Cytoplasmic" evidence="1">
    <location>
        <begin position="159"/>
        <end position="164"/>
    </location>
</feature>
<feature type="transmembrane region" description="Helical" evidence="1">
    <location>
        <begin position="165"/>
        <end position="185"/>
    </location>
</feature>
<feature type="topological domain" description="Periplasmic" evidence="1">
    <location>
        <begin position="186"/>
        <end position="196"/>
    </location>
</feature>
<feature type="transmembrane region" description="Helical" evidence="1">
    <location>
        <begin position="197"/>
        <end position="217"/>
    </location>
</feature>
<feature type="topological domain" description="Cytoplasmic" evidence="1">
    <location>
        <begin position="218"/>
        <end position="224"/>
    </location>
</feature>
<feature type="transmembrane region" description="Helical" evidence="1">
    <location>
        <begin position="225"/>
        <end position="245"/>
    </location>
</feature>
<feature type="topological domain" description="Periplasmic" evidence="1">
    <location>
        <begin position="246"/>
        <end position="262"/>
    </location>
</feature>
<feature type="transmembrane region" description="Helical" evidence="1">
    <location>
        <begin position="263"/>
        <end position="283"/>
    </location>
</feature>
<feature type="topological domain" description="Cytoplasmic" evidence="1">
    <location>
        <begin position="284"/>
        <end position="285"/>
    </location>
</feature>
<feature type="transmembrane region" description="Helical" evidence="1">
    <location>
        <begin position="286"/>
        <end position="306"/>
    </location>
</feature>
<feature type="topological domain" description="Periplasmic" evidence="1">
    <location>
        <begin position="307"/>
        <end position="341"/>
    </location>
</feature>
<feature type="transmembrane region" description="Helical" evidence="1">
    <location>
        <begin position="342"/>
        <end position="362"/>
    </location>
</feature>
<feature type="topological domain" description="Cytoplasmic" evidence="1">
    <location>
        <begin position="363"/>
        <end position="395"/>
    </location>
</feature>
<feature type="transmembrane region" description="Helical" evidence="1">
    <location>
        <begin position="396"/>
        <end position="416"/>
    </location>
</feature>
<feature type="topological domain" description="Periplasmic" evidence="1">
    <location>
        <begin position="417"/>
        <end position="430"/>
    </location>
</feature>
<feature type="transmembrane region" description="Helical" evidence="1">
    <location>
        <begin position="431"/>
        <end position="451"/>
    </location>
</feature>
<feature type="topological domain" description="Cytoplasmic" evidence="1">
    <location>
        <begin position="452"/>
        <end position="471"/>
    </location>
</feature>
<protein>
    <recommendedName>
        <fullName evidence="1">Putative multidrug resistance protein MdtD</fullName>
    </recommendedName>
</protein>
<comment type="subcellular location">
    <subcellularLocation>
        <location evidence="1">Cell inner membrane</location>
        <topology evidence="1">Multi-pass membrane protein</topology>
    </subcellularLocation>
</comment>
<comment type="similarity">
    <text evidence="1">Belongs to the major facilitator superfamily. TCR/Tet family.</text>
</comment>
<keyword id="KW-0997">Cell inner membrane</keyword>
<keyword id="KW-1003">Cell membrane</keyword>
<keyword id="KW-0472">Membrane</keyword>
<keyword id="KW-0812">Transmembrane</keyword>
<keyword id="KW-1133">Transmembrane helix</keyword>
<keyword id="KW-0813">Transport</keyword>
<sequence length="471" mass="50888">MTDLPDSTRWQLWIVAFGFFMQSLDTTIVNTALPSMAQSLGESPLHMHMVIVSYVLTVAVMLPASGWLADKVGVRNIFFTAIVLFTLGSLFCALSGTLNELLLARALQGVGGAMMVPVGRLTVMKIVPREQYMAAMTFVTLPGQVGPLLGPALGGLLVEYASWHWIFLINIPVGIIGAIATLMLMPNYTMQTRRFDLSGFLLLAVGMAVLTLALDGSKGTGFSPLAIAGLVAVGVVALVLYLLHAQNNNRALFSLKLFRTRTFSLGLAGSFAGRIGSGMLPFMTPVFLQIGLGFSPFHAGLMMIPMVLGSMGMKRIVVQVVNRFGYRRVLVATTLGLSLVTLLFMTTALLGWYYVLPFVLFLQGMVNSTRFSSMNTLTLKDLPDNLASSGNSLLSMIMQLSMSIGVTIAGLLLGLFGSQHVSVDSGTTQTVFMYTWLSMAFIIALPAFVFARVPSDTHQNVAISRRKRSAQ</sequence>
<dbReference type="EMBL" id="CP000243">
    <property type="protein sequence ID" value="ABE07820.1"/>
    <property type="molecule type" value="Genomic_DNA"/>
</dbReference>
<dbReference type="RefSeq" id="WP_000130864.1">
    <property type="nucleotide sequence ID" value="NZ_CP064825.1"/>
</dbReference>
<dbReference type="SMR" id="Q1R9Z4"/>
<dbReference type="KEGG" id="eci:UTI89_C2352"/>
<dbReference type="HOGENOM" id="CLU_000960_28_0_6"/>
<dbReference type="Proteomes" id="UP000001952">
    <property type="component" value="Chromosome"/>
</dbReference>
<dbReference type="GO" id="GO:0005886">
    <property type="term" value="C:plasma membrane"/>
    <property type="evidence" value="ECO:0007669"/>
    <property type="project" value="UniProtKB-SubCell"/>
</dbReference>
<dbReference type="GO" id="GO:0022857">
    <property type="term" value="F:transmembrane transporter activity"/>
    <property type="evidence" value="ECO:0007669"/>
    <property type="project" value="UniProtKB-UniRule"/>
</dbReference>
<dbReference type="CDD" id="cd17503">
    <property type="entry name" value="MFS_LmrB_MDR_like"/>
    <property type="match status" value="1"/>
</dbReference>
<dbReference type="FunFam" id="1.20.1250.20:FF:000021">
    <property type="entry name" value="Putative multidrug resistance protein MdtD"/>
    <property type="match status" value="1"/>
</dbReference>
<dbReference type="FunFam" id="1.20.1720.10:FF:000001">
    <property type="entry name" value="Putative multidrug resistance protein MdtD"/>
    <property type="match status" value="1"/>
</dbReference>
<dbReference type="Gene3D" id="1.20.1250.20">
    <property type="entry name" value="MFS general substrate transporter like domains"/>
    <property type="match status" value="1"/>
</dbReference>
<dbReference type="Gene3D" id="1.20.1720.10">
    <property type="entry name" value="Multidrug resistance protein D"/>
    <property type="match status" value="1"/>
</dbReference>
<dbReference type="HAMAP" id="MF_01577">
    <property type="entry name" value="MFS_MdtD"/>
    <property type="match status" value="1"/>
</dbReference>
<dbReference type="InterPro" id="IPR004638">
    <property type="entry name" value="EmrB-like"/>
</dbReference>
<dbReference type="InterPro" id="IPR011701">
    <property type="entry name" value="MFS"/>
</dbReference>
<dbReference type="InterPro" id="IPR020846">
    <property type="entry name" value="MFS_dom"/>
</dbReference>
<dbReference type="InterPro" id="IPR036259">
    <property type="entry name" value="MFS_trans_sf"/>
</dbReference>
<dbReference type="InterPro" id="IPR023721">
    <property type="entry name" value="Multi-R_MdtD"/>
</dbReference>
<dbReference type="NCBIfam" id="TIGR00711">
    <property type="entry name" value="efflux_EmrB"/>
    <property type="match status" value="1"/>
</dbReference>
<dbReference type="NCBIfam" id="NF007799">
    <property type="entry name" value="PRK10504.1"/>
    <property type="match status" value="1"/>
</dbReference>
<dbReference type="PANTHER" id="PTHR42718:SF46">
    <property type="entry name" value="BLR6921 PROTEIN"/>
    <property type="match status" value="1"/>
</dbReference>
<dbReference type="PANTHER" id="PTHR42718">
    <property type="entry name" value="MAJOR FACILITATOR SUPERFAMILY MULTIDRUG TRANSPORTER MFSC"/>
    <property type="match status" value="1"/>
</dbReference>
<dbReference type="Pfam" id="PF07690">
    <property type="entry name" value="MFS_1"/>
    <property type="match status" value="1"/>
</dbReference>
<dbReference type="PRINTS" id="PR01036">
    <property type="entry name" value="TCRTETB"/>
</dbReference>
<dbReference type="SUPFAM" id="SSF103473">
    <property type="entry name" value="MFS general substrate transporter"/>
    <property type="match status" value="1"/>
</dbReference>
<dbReference type="PROSITE" id="PS50850">
    <property type="entry name" value="MFS"/>
    <property type="match status" value="1"/>
</dbReference>